<keyword id="KW-0119">Carbohydrate metabolism</keyword>
<keyword id="KW-0456">Lyase</keyword>
<keyword id="KW-1185">Reference proteome</keyword>
<accession>Q83QN4</accession>
<name>MURQ_SHIFL</name>
<comment type="function">
    <text evidence="1">Specifically catalyzes the cleavage of the D-lactyl ether substituent of MurNAc 6-phosphate, producing GlcNAc 6-phosphate and D-lactate. Together with AnmK, is also required for the utilization of anhydro-N-acetylmuramic acid (anhMurNAc) either imported from the medium or derived from its own cell wall murein, and thus plays a role in cell wall recycling.</text>
</comment>
<comment type="catalytic activity">
    <reaction evidence="1">
        <text>N-acetyl-D-muramate 6-phosphate + H2O = N-acetyl-D-glucosamine 6-phosphate + (R)-lactate</text>
        <dbReference type="Rhea" id="RHEA:26410"/>
        <dbReference type="ChEBI" id="CHEBI:15377"/>
        <dbReference type="ChEBI" id="CHEBI:16004"/>
        <dbReference type="ChEBI" id="CHEBI:57513"/>
        <dbReference type="ChEBI" id="CHEBI:58722"/>
        <dbReference type="EC" id="4.2.1.126"/>
    </reaction>
</comment>
<comment type="pathway">
    <text evidence="1">Amino-sugar metabolism; 1,6-anhydro-N-acetylmuramate degradation.</text>
</comment>
<comment type="pathway">
    <text evidence="1">Amino-sugar metabolism; N-acetylmuramate degradation.</text>
</comment>
<comment type="pathway">
    <text evidence="1">Cell wall biogenesis; peptidoglycan recycling.</text>
</comment>
<comment type="subunit">
    <text evidence="1">Homodimer.</text>
</comment>
<comment type="induction">
    <text evidence="1">Induced by MurNAc 6-phosphate that releases the repressor MurR from the DNA. Repressed by MurR in the absence of MurNAc 6-phosphate.</text>
</comment>
<comment type="miscellaneous">
    <text evidence="1">A lyase-type mechanism (elimination/hydration) is suggested for the cleavage of the lactyl ether bond of MurNAc 6-phosphate, with the formation of an alpha,beta-unsaturated aldehyde intermediate with (E)-stereochemistry, followed by the syn addition of water to give product.</text>
</comment>
<comment type="similarity">
    <text evidence="1">Belongs to the GCKR-like family. MurNAc-6-P etherase subfamily.</text>
</comment>
<evidence type="ECO:0000255" key="1">
    <source>
        <dbReference type="HAMAP-Rule" id="MF_00068"/>
    </source>
</evidence>
<sequence>MQLEKMITEGSNTASAEIDRVSTLEMCRIINDEDKTVPPAVDRVLPDIAAAIDVIHAQVSGGGRLIYLGAGTSGRLGILDASECPPTYGVKPGLVVGLIAGGEYAIQHAVEGAEDSREGGVNDLKNINLTAQDVVVGIAASGRTPYVIAGLEYARQLGCRTVGISCNPGSAVSTTAEFAITPIVGAEVVTGSSRMKAGTAQKLVLNMLSTGLMIKSGKVFGNLMVDVVATNEKLHVRQVNIVKNATGCNAEQAEAALIACERNCKTAIVMVLKNLDAAEAKKRLDQHGGFIRQVLDKE</sequence>
<proteinExistence type="inferred from homology"/>
<protein>
    <recommendedName>
        <fullName evidence="1">N-acetylmuramic acid 6-phosphate etherase</fullName>
        <shortName evidence="1">MurNAc-6-P etherase</shortName>
        <ecNumber evidence="1">4.2.1.126</ecNumber>
    </recommendedName>
    <alternativeName>
        <fullName evidence="1">N-acetylmuramic acid 6-phosphate hydrolase</fullName>
    </alternativeName>
    <alternativeName>
        <fullName evidence="1">N-acetylmuramic acid 6-phosphate lyase</fullName>
    </alternativeName>
</protein>
<dbReference type="EC" id="4.2.1.126" evidence="1"/>
<dbReference type="EMBL" id="AE005674">
    <property type="protein sequence ID" value="AAN43987.1"/>
    <property type="molecule type" value="Genomic_DNA"/>
</dbReference>
<dbReference type="EMBL" id="AE014073">
    <property type="protein sequence ID" value="AAP17802.1"/>
    <property type="molecule type" value="Genomic_DNA"/>
</dbReference>
<dbReference type="RefSeq" id="NP_708280.1">
    <property type="nucleotide sequence ID" value="NC_004337.2"/>
</dbReference>
<dbReference type="RefSeq" id="WP_001175651.1">
    <property type="nucleotide sequence ID" value="NZ_WPGW01000057.1"/>
</dbReference>
<dbReference type="SMR" id="Q83QN4"/>
<dbReference type="STRING" id="198214.SF2481"/>
<dbReference type="PaxDb" id="198214-SF2481"/>
<dbReference type="GeneID" id="1024403"/>
<dbReference type="KEGG" id="sfl:SF2481"/>
<dbReference type="KEGG" id="sfx:S2629"/>
<dbReference type="PATRIC" id="fig|198214.7.peg.2966"/>
<dbReference type="HOGENOM" id="CLU_049049_1_1_6"/>
<dbReference type="UniPathway" id="UPA00342"/>
<dbReference type="UniPathway" id="UPA00343"/>
<dbReference type="UniPathway" id="UPA00544"/>
<dbReference type="Proteomes" id="UP000001006">
    <property type="component" value="Chromosome"/>
</dbReference>
<dbReference type="Proteomes" id="UP000002673">
    <property type="component" value="Chromosome"/>
</dbReference>
<dbReference type="GO" id="GO:0097367">
    <property type="term" value="F:carbohydrate derivative binding"/>
    <property type="evidence" value="ECO:0007669"/>
    <property type="project" value="InterPro"/>
</dbReference>
<dbReference type="GO" id="GO:0016835">
    <property type="term" value="F:carbon-oxygen lyase activity"/>
    <property type="evidence" value="ECO:0007669"/>
    <property type="project" value="UniProtKB-UniRule"/>
</dbReference>
<dbReference type="GO" id="GO:0016803">
    <property type="term" value="F:ether hydrolase activity"/>
    <property type="evidence" value="ECO:0007669"/>
    <property type="project" value="TreeGrafter"/>
</dbReference>
<dbReference type="GO" id="GO:0097175">
    <property type="term" value="P:1,6-anhydro-N-acetyl-beta-muramic acid catabolic process"/>
    <property type="evidence" value="ECO:0007669"/>
    <property type="project" value="UniProtKB-UniRule"/>
</dbReference>
<dbReference type="GO" id="GO:0046348">
    <property type="term" value="P:amino sugar catabolic process"/>
    <property type="evidence" value="ECO:0007669"/>
    <property type="project" value="InterPro"/>
</dbReference>
<dbReference type="GO" id="GO:0097173">
    <property type="term" value="P:N-acetylmuramic acid catabolic process"/>
    <property type="evidence" value="ECO:0007669"/>
    <property type="project" value="UniProtKB-UniPathway"/>
</dbReference>
<dbReference type="GO" id="GO:0009254">
    <property type="term" value="P:peptidoglycan turnover"/>
    <property type="evidence" value="ECO:0007669"/>
    <property type="project" value="UniProtKB-UniRule"/>
</dbReference>
<dbReference type="CDD" id="cd05007">
    <property type="entry name" value="SIS_Etherase"/>
    <property type="match status" value="1"/>
</dbReference>
<dbReference type="FunFam" id="1.10.8.1080:FF:000001">
    <property type="entry name" value="N-acetylmuramic acid 6-phosphate etherase"/>
    <property type="match status" value="1"/>
</dbReference>
<dbReference type="FunFam" id="3.40.50.10490:FF:000014">
    <property type="entry name" value="N-acetylmuramic acid 6-phosphate etherase"/>
    <property type="match status" value="1"/>
</dbReference>
<dbReference type="Gene3D" id="1.10.8.1080">
    <property type="match status" value="1"/>
</dbReference>
<dbReference type="Gene3D" id="3.40.50.10490">
    <property type="entry name" value="Glucose-6-phosphate isomerase like protein, domain 1"/>
    <property type="match status" value="1"/>
</dbReference>
<dbReference type="HAMAP" id="MF_00068">
    <property type="entry name" value="MurQ"/>
    <property type="match status" value="1"/>
</dbReference>
<dbReference type="InterPro" id="IPR005488">
    <property type="entry name" value="Etherase_MurQ"/>
</dbReference>
<dbReference type="InterPro" id="IPR005486">
    <property type="entry name" value="Glucokinase_regulatory_CS"/>
</dbReference>
<dbReference type="InterPro" id="IPR040190">
    <property type="entry name" value="MURQ/GCKR"/>
</dbReference>
<dbReference type="InterPro" id="IPR001347">
    <property type="entry name" value="SIS_dom"/>
</dbReference>
<dbReference type="InterPro" id="IPR046348">
    <property type="entry name" value="SIS_dom_sf"/>
</dbReference>
<dbReference type="NCBIfam" id="TIGR00274">
    <property type="entry name" value="N-acetylmuramic acid 6-phosphate etherase"/>
    <property type="match status" value="1"/>
</dbReference>
<dbReference type="NCBIfam" id="NF003915">
    <property type="entry name" value="PRK05441.1"/>
    <property type="match status" value="1"/>
</dbReference>
<dbReference type="NCBIfam" id="NF009222">
    <property type="entry name" value="PRK12570.1"/>
    <property type="match status" value="1"/>
</dbReference>
<dbReference type="PANTHER" id="PTHR10088">
    <property type="entry name" value="GLUCOKINASE REGULATORY PROTEIN"/>
    <property type="match status" value="1"/>
</dbReference>
<dbReference type="PANTHER" id="PTHR10088:SF4">
    <property type="entry name" value="GLUCOKINASE REGULATORY PROTEIN"/>
    <property type="match status" value="1"/>
</dbReference>
<dbReference type="Pfam" id="PF22645">
    <property type="entry name" value="GKRP_SIS_N"/>
    <property type="match status" value="1"/>
</dbReference>
<dbReference type="SUPFAM" id="SSF53697">
    <property type="entry name" value="SIS domain"/>
    <property type="match status" value="1"/>
</dbReference>
<dbReference type="PROSITE" id="PS01272">
    <property type="entry name" value="GCKR"/>
    <property type="match status" value="1"/>
</dbReference>
<dbReference type="PROSITE" id="PS51464">
    <property type="entry name" value="SIS"/>
    <property type="match status" value="1"/>
</dbReference>
<organism>
    <name type="scientific">Shigella flexneri</name>
    <dbReference type="NCBI Taxonomy" id="623"/>
    <lineage>
        <taxon>Bacteria</taxon>
        <taxon>Pseudomonadati</taxon>
        <taxon>Pseudomonadota</taxon>
        <taxon>Gammaproteobacteria</taxon>
        <taxon>Enterobacterales</taxon>
        <taxon>Enterobacteriaceae</taxon>
        <taxon>Shigella</taxon>
    </lineage>
</organism>
<feature type="chain" id="PRO_0000214834" description="N-acetylmuramic acid 6-phosphate etherase">
    <location>
        <begin position="1"/>
        <end position="298"/>
    </location>
</feature>
<feature type="domain" description="SIS" evidence="1">
    <location>
        <begin position="55"/>
        <end position="218"/>
    </location>
</feature>
<feature type="active site" description="Proton donor" evidence="1">
    <location>
        <position position="83"/>
    </location>
</feature>
<feature type="active site" evidence="1">
    <location>
        <position position="114"/>
    </location>
</feature>
<gene>
    <name evidence="1" type="primary">murQ</name>
    <name type="synonym">yfeU</name>
    <name type="ordered locus">SF2481</name>
    <name type="ordered locus">S2629</name>
</gene>
<reference key="1">
    <citation type="journal article" date="2002" name="Nucleic Acids Res.">
        <title>Genome sequence of Shigella flexneri 2a: insights into pathogenicity through comparison with genomes of Escherichia coli K12 and O157.</title>
        <authorList>
            <person name="Jin Q."/>
            <person name="Yuan Z."/>
            <person name="Xu J."/>
            <person name="Wang Y."/>
            <person name="Shen Y."/>
            <person name="Lu W."/>
            <person name="Wang J."/>
            <person name="Liu H."/>
            <person name="Yang J."/>
            <person name="Yang F."/>
            <person name="Zhang X."/>
            <person name="Zhang J."/>
            <person name="Yang G."/>
            <person name="Wu H."/>
            <person name="Qu D."/>
            <person name="Dong J."/>
            <person name="Sun L."/>
            <person name="Xue Y."/>
            <person name="Zhao A."/>
            <person name="Gao Y."/>
            <person name="Zhu J."/>
            <person name="Kan B."/>
            <person name="Ding K."/>
            <person name="Chen S."/>
            <person name="Cheng H."/>
            <person name="Yao Z."/>
            <person name="He B."/>
            <person name="Chen R."/>
            <person name="Ma D."/>
            <person name="Qiang B."/>
            <person name="Wen Y."/>
            <person name="Hou Y."/>
            <person name="Yu J."/>
        </authorList>
    </citation>
    <scope>NUCLEOTIDE SEQUENCE [LARGE SCALE GENOMIC DNA]</scope>
    <source>
        <strain>301 / Serotype 2a</strain>
    </source>
</reference>
<reference key="2">
    <citation type="journal article" date="2003" name="Infect. Immun.">
        <title>Complete genome sequence and comparative genomics of Shigella flexneri serotype 2a strain 2457T.</title>
        <authorList>
            <person name="Wei J."/>
            <person name="Goldberg M.B."/>
            <person name="Burland V."/>
            <person name="Venkatesan M.M."/>
            <person name="Deng W."/>
            <person name="Fournier G."/>
            <person name="Mayhew G.F."/>
            <person name="Plunkett G. III"/>
            <person name="Rose D.J."/>
            <person name="Darling A."/>
            <person name="Mau B."/>
            <person name="Perna N.T."/>
            <person name="Payne S.M."/>
            <person name="Runyen-Janecky L.J."/>
            <person name="Zhou S."/>
            <person name="Schwartz D.C."/>
            <person name="Blattner F.R."/>
        </authorList>
    </citation>
    <scope>NUCLEOTIDE SEQUENCE [LARGE SCALE GENOMIC DNA]</scope>
    <source>
        <strain>ATCC 700930 / 2457T / Serotype 2a</strain>
    </source>
</reference>